<protein>
    <recommendedName>
        <fullName evidence="2">Bifunctional protein PyrR</fullName>
    </recommendedName>
    <domain>
        <recommendedName>
            <fullName evidence="2">Pyrimidine operon regulatory protein</fullName>
        </recommendedName>
    </domain>
    <domain>
        <recommendedName>
            <fullName evidence="2">Uracil phosphoribosyltransferase</fullName>
            <shortName evidence="2">UPRTase</shortName>
            <ecNumber evidence="2">2.4.2.9</ecNumber>
        </recommendedName>
    </domain>
</protein>
<sequence length="173" mass="19608">MKTKEVVDELTVKRAITRITYEIIERNKDLNKIVLAGIKTRGVFIAHRIQERLKQLENLSVPVVELDTKPFRDDVKSGEDTSLVSVDVTDREVILVDDVLYTGRTIRAAIDNIVGHGRPARVSLAVLVDRGHRELPIRPDYVGKNIPTSRSEEIIVEMTELDDQDRVLITEEA</sequence>
<dbReference type="EC" id="2.4.2.9" evidence="2"/>
<dbReference type="EMBL" id="AE005672">
    <property type="protein sequence ID" value="AAK75382.1"/>
    <property type="molecule type" value="Genomic_DNA"/>
</dbReference>
<dbReference type="PIR" id="E95148">
    <property type="entry name" value="E95148"/>
</dbReference>
<dbReference type="RefSeq" id="WP_000850024.1">
    <property type="nucleotide sequence ID" value="NZ_CP155539.1"/>
</dbReference>
<dbReference type="SMR" id="P65946"/>
<dbReference type="IntAct" id="P65946">
    <property type="interactions" value="8"/>
</dbReference>
<dbReference type="PaxDb" id="170187-SP_1278"/>
<dbReference type="EnsemblBacteria" id="AAK75382">
    <property type="protein sequence ID" value="AAK75382"/>
    <property type="gene ID" value="SP_1278"/>
</dbReference>
<dbReference type="GeneID" id="45653435"/>
<dbReference type="KEGG" id="spn:SP_1278"/>
<dbReference type="eggNOG" id="COG2065">
    <property type="taxonomic scope" value="Bacteria"/>
</dbReference>
<dbReference type="PhylomeDB" id="P65946"/>
<dbReference type="BioCyc" id="SPNE170187:G1FZB-1291-MONOMER"/>
<dbReference type="PHI-base" id="PHI:8614"/>
<dbReference type="Proteomes" id="UP000000585">
    <property type="component" value="Chromosome"/>
</dbReference>
<dbReference type="GO" id="GO:0003723">
    <property type="term" value="F:RNA binding"/>
    <property type="evidence" value="ECO:0007669"/>
    <property type="project" value="UniProtKB-UniRule"/>
</dbReference>
<dbReference type="GO" id="GO:0004845">
    <property type="term" value="F:uracil phosphoribosyltransferase activity"/>
    <property type="evidence" value="ECO:0007669"/>
    <property type="project" value="UniProtKB-UniRule"/>
</dbReference>
<dbReference type="GO" id="GO:0006353">
    <property type="term" value="P:DNA-templated transcription termination"/>
    <property type="evidence" value="ECO:0007669"/>
    <property type="project" value="UniProtKB-UniRule"/>
</dbReference>
<dbReference type="CDD" id="cd06223">
    <property type="entry name" value="PRTases_typeI"/>
    <property type="match status" value="1"/>
</dbReference>
<dbReference type="FunFam" id="3.40.50.2020:FF:000020">
    <property type="entry name" value="Bifunctional protein PyrR"/>
    <property type="match status" value="1"/>
</dbReference>
<dbReference type="Gene3D" id="3.40.50.2020">
    <property type="match status" value="1"/>
</dbReference>
<dbReference type="HAMAP" id="MF_01219">
    <property type="entry name" value="PyrR"/>
    <property type="match status" value="1"/>
</dbReference>
<dbReference type="InterPro" id="IPR000836">
    <property type="entry name" value="PRibTrfase_dom"/>
</dbReference>
<dbReference type="InterPro" id="IPR029057">
    <property type="entry name" value="PRTase-like"/>
</dbReference>
<dbReference type="InterPro" id="IPR023050">
    <property type="entry name" value="PyrR"/>
</dbReference>
<dbReference type="InterPro" id="IPR050137">
    <property type="entry name" value="PyrR_bifunctional"/>
</dbReference>
<dbReference type="NCBIfam" id="NF003548">
    <property type="entry name" value="PRK05205.1-4"/>
    <property type="match status" value="1"/>
</dbReference>
<dbReference type="NCBIfam" id="NF003549">
    <property type="entry name" value="PRK05205.1-5"/>
    <property type="match status" value="1"/>
</dbReference>
<dbReference type="PANTHER" id="PTHR11608">
    <property type="entry name" value="BIFUNCTIONAL PROTEIN PYRR"/>
    <property type="match status" value="1"/>
</dbReference>
<dbReference type="PANTHER" id="PTHR11608:SF0">
    <property type="entry name" value="BIFUNCTIONAL PROTEIN PYRR"/>
    <property type="match status" value="1"/>
</dbReference>
<dbReference type="Pfam" id="PF00156">
    <property type="entry name" value="Pribosyltran"/>
    <property type="match status" value="1"/>
</dbReference>
<dbReference type="SUPFAM" id="SSF53271">
    <property type="entry name" value="PRTase-like"/>
    <property type="match status" value="1"/>
</dbReference>
<reference key="1">
    <citation type="journal article" date="2001" name="Science">
        <title>Complete genome sequence of a virulent isolate of Streptococcus pneumoniae.</title>
        <authorList>
            <person name="Tettelin H."/>
            <person name="Nelson K.E."/>
            <person name="Paulsen I.T."/>
            <person name="Eisen J.A."/>
            <person name="Read T.D."/>
            <person name="Peterson S.N."/>
            <person name="Heidelberg J.F."/>
            <person name="DeBoy R.T."/>
            <person name="Haft D.H."/>
            <person name="Dodson R.J."/>
            <person name="Durkin A.S."/>
            <person name="Gwinn M.L."/>
            <person name="Kolonay J.F."/>
            <person name="Nelson W.C."/>
            <person name="Peterson J.D."/>
            <person name="Umayam L.A."/>
            <person name="White O."/>
            <person name="Salzberg S.L."/>
            <person name="Lewis M.R."/>
            <person name="Radune D."/>
            <person name="Holtzapple E.K."/>
            <person name="Khouri H.M."/>
            <person name="Wolf A.M."/>
            <person name="Utterback T.R."/>
            <person name="Hansen C.L."/>
            <person name="McDonald L.A."/>
            <person name="Feldblyum T.V."/>
            <person name="Angiuoli S.V."/>
            <person name="Dickinson T."/>
            <person name="Hickey E.K."/>
            <person name="Holt I.E."/>
            <person name="Loftus B.J."/>
            <person name="Yang F."/>
            <person name="Smith H.O."/>
            <person name="Venter J.C."/>
            <person name="Dougherty B.A."/>
            <person name="Morrison D.A."/>
            <person name="Hollingshead S.K."/>
            <person name="Fraser C.M."/>
        </authorList>
    </citation>
    <scope>NUCLEOTIDE SEQUENCE [LARGE SCALE GENOMIC DNA]</scope>
    <source>
        <strain>ATCC BAA-334 / TIGR4</strain>
    </source>
</reference>
<comment type="function">
    <text evidence="2">Regulates transcriptional attenuation of the pyrimidine nucleotide (pyr) operon by binding in a uridine-dependent manner to specific sites on pyr mRNA. This disrupts an antiterminator hairpin in the RNA and favors formation of a downstream transcription terminator, leading to a reduced expression of downstream genes.</text>
</comment>
<comment type="function">
    <text evidence="2">Also displays a weak uracil phosphoribosyltransferase activity which is not physiologically significant.</text>
</comment>
<comment type="catalytic activity">
    <reaction evidence="2">
        <text>UMP + diphosphate = 5-phospho-alpha-D-ribose 1-diphosphate + uracil</text>
        <dbReference type="Rhea" id="RHEA:13017"/>
        <dbReference type="ChEBI" id="CHEBI:17568"/>
        <dbReference type="ChEBI" id="CHEBI:33019"/>
        <dbReference type="ChEBI" id="CHEBI:57865"/>
        <dbReference type="ChEBI" id="CHEBI:58017"/>
        <dbReference type="EC" id="2.4.2.9"/>
    </reaction>
</comment>
<comment type="subunit">
    <text evidence="2">Homodimer and homohexamer; in equilibrium.</text>
</comment>
<comment type="interaction">
    <interactant intactId="EBI-2207248">
        <id>P65946</id>
    </interactant>
    <interactant intactId="EBI-2207316">
        <id>P63544</id>
        <label>apt</label>
    </interactant>
    <organismsDiffer>false</organismsDiffer>
    <experiments>2</experiments>
</comment>
<comment type="interaction">
    <interactant intactId="EBI-2207248">
        <id>P65946</id>
    </interactant>
    <interactant intactId="EBI-2207079">
        <id>P95830</id>
        <label>dnaJ</label>
    </interactant>
    <organismsDiffer>false</organismsDiffer>
    <experiments>2</experiments>
</comment>
<comment type="interaction">
    <interactant intactId="EBI-2207248">
        <id>P65946</id>
    </interactant>
    <interactant intactId="EBI-2207206">
        <id>Q97QS2</id>
        <label>eno</label>
    </interactant>
    <organismsDiffer>false</organismsDiffer>
    <experiments>2</experiments>
</comment>
<comment type="interaction">
    <interactant intactId="EBI-2207248">
        <id>P65946</id>
    </interactant>
    <interactant intactId="EBI-2207053">
        <id>Q97SE5</id>
        <label>gatC</label>
    </interactant>
    <organismsDiffer>false</organismsDiffer>
    <experiments>2</experiments>
</comment>
<comment type="interaction">
    <interactant intactId="EBI-2207248">
        <id>P65946</id>
    </interactant>
    <interactant intactId="EBI-2206949">
        <id>Q97NV3</id>
        <label>groES</label>
    </interactant>
    <organismsDiffer>false</organismsDiffer>
    <experiments>2</experiments>
</comment>
<comment type="interaction">
    <interactant intactId="EBI-2207248">
        <id>P65946</id>
    </interactant>
    <interactant intactId="EBI-2207999">
        <id>Q9X9S0</id>
        <label>pyrDA</label>
    </interactant>
    <organismsDiffer>false</organismsDiffer>
    <experiments>2</experiments>
</comment>
<comment type="interaction">
    <interactant intactId="EBI-2207248">
        <id>P65946</id>
    </interactant>
    <interactant intactId="EBI-2207193">
        <id>A0A0H2UPY3</id>
        <label>SP_1103</label>
    </interactant>
    <organismsDiffer>false</organismsDiffer>
    <experiments>2</experiments>
</comment>
<comment type="interaction">
    <interactant intactId="EBI-2207248">
        <id>P65946</id>
    </interactant>
    <interactant intactId="EBI-2206983">
        <id>Q97SR4</id>
        <label>uppS</label>
    </interactant>
    <organismsDiffer>false</organismsDiffer>
    <experiments>2</experiments>
</comment>
<comment type="similarity">
    <text evidence="2">Belongs to the purine/pyrimidine phosphoribosyltransferase family. PyrR subfamily.</text>
</comment>
<organism>
    <name type="scientific">Streptococcus pneumoniae serotype 4 (strain ATCC BAA-334 / TIGR4)</name>
    <dbReference type="NCBI Taxonomy" id="170187"/>
    <lineage>
        <taxon>Bacteria</taxon>
        <taxon>Bacillati</taxon>
        <taxon>Bacillota</taxon>
        <taxon>Bacilli</taxon>
        <taxon>Lactobacillales</taxon>
        <taxon>Streptococcaceae</taxon>
        <taxon>Streptococcus</taxon>
    </lineage>
</organism>
<evidence type="ECO:0000250" key="1"/>
<evidence type="ECO:0000255" key="2">
    <source>
        <dbReference type="HAMAP-Rule" id="MF_01219"/>
    </source>
</evidence>
<proteinExistence type="evidence at protein level"/>
<keyword id="KW-0328">Glycosyltransferase</keyword>
<keyword id="KW-1185">Reference proteome</keyword>
<keyword id="KW-0694">RNA-binding</keyword>
<keyword id="KW-0804">Transcription</keyword>
<keyword id="KW-0805">Transcription regulation</keyword>
<keyword id="KW-0806">Transcription termination</keyword>
<keyword id="KW-0808">Transferase</keyword>
<feature type="chain" id="PRO_0000183064" description="Bifunctional protein PyrR">
    <location>
        <begin position="1"/>
        <end position="173"/>
    </location>
</feature>
<feature type="short sequence motif" description="PRPP-binding" evidence="2">
    <location>
        <begin position="93"/>
        <end position="105"/>
    </location>
</feature>
<feature type="binding site" evidence="1">
    <location>
        <begin position="40"/>
        <end position="41"/>
    </location>
    <ligand>
        <name>substrate</name>
    </ligand>
</feature>
<feature type="binding site" evidence="1">
    <location>
        <begin position="97"/>
        <end position="105"/>
    </location>
    <ligand>
        <name>substrate</name>
    </ligand>
</feature>
<feature type="binding site" evidence="1">
    <location>
        <position position="130"/>
    </location>
    <ligand>
        <name>substrate</name>
    </ligand>
</feature>
<gene>
    <name evidence="2" type="primary">pyrR</name>
    <name type="ordered locus">SP_1278</name>
</gene>
<name>PYRR_STRPN</name>
<accession>P65946</accession>
<accession>Q97QE1</accession>